<organism>
    <name type="scientific">Salmonella choleraesuis (strain SC-B67)</name>
    <dbReference type="NCBI Taxonomy" id="321314"/>
    <lineage>
        <taxon>Bacteria</taxon>
        <taxon>Pseudomonadati</taxon>
        <taxon>Pseudomonadota</taxon>
        <taxon>Gammaproteobacteria</taxon>
        <taxon>Enterobacterales</taxon>
        <taxon>Enterobacteriaceae</taxon>
        <taxon>Salmonella</taxon>
    </lineage>
</organism>
<sequence length="256" mass="26825">MLRIADKTFDSHLFTGTGKFASSQLMVEAIRASGSQLVTLAMKRVDLRQHNDAILAPLIEAGVTLLPNTSGAKTAEEAIFAAQLAREALGTHWLKLEIHPDARWLLPDPIETLKAAEALVKQGFVVLPYCGADPVLCKRLEEVGCAAVMPLGAPIGSNQGLETKAMLEIIIQQATVPVVVDAGIGVPSHAAQALEMGADAVLVNTAIAVADDPVMMATAFRLAVEAGLLARQAVPGNRSTYASATSPLTGFLEALA</sequence>
<reference key="1">
    <citation type="journal article" date="2005" name="Nucleic Acids Res.">
        <title>The genome sequence of Salmonella enterica serovar Choleraesuis, a highly invasive and resistant zoonotic pathogen.</title>
        <authorList>
            <person name="Chiu C.-H."/>
            <person name="Tang P."/>
            <person name="Chu C."/>
            <person name="Hu S."/>
            <person name="Bao Q."/>
            <person name="Yu J."/>
            <person name="Chou Y.-Y."/>
            <person name="Wang H.-S."/>
            <person name="Lee Y.-S."/>
        </authorList>
    </citation>
    <scope>NUCLEOTIDE SEQUENCE [LARGE SCALE GENOMIC DNA]</scope>
    <source>
        <strain>SC-B67</strain>
    </source>
</reference>
<evidence type="ECO:0000255" key="1">
    <source>
        <dbReference type="HAMAP-Rule" id="MF_00443"/>
    </source>
</evidence>
<evidence type="ECO:0000305" key="2"/>
<proteinExistence type="inferred from homology"/>
<keyword id="KW-0963">Cytoplasm</keyword>
<keyword id="KW-0704">Schiff base</keyword>
<keyword id="KW-0784">Thiamine biosynthesis</keyword>
<keyword id="KW-0808">Transferase</keyword>
<gene>
    <name evidence="1" type="primary">thiG</name>
    <name type="ordered locus">SCH_4042</name>
</gene>
<accession>Q57H64</accession>
<protein>
    <recommendedName>
        <fullName evidence="1">Thiazole synthase</fullName>
        <ecNumber evidence="1">2.8.1.10</ecNumber>
    </recommendedName>
</protein>
<feature type="chain" id="PRO_0000162854" description="Thiazole synthase">
    <location>
        <begin position="1"/>
        <end position="256"/>
    </location>
</feature>
<feature type="active site" description="Schiff-base intermediate with DXP" evidence="1">
    <location>
        <position position="95"/>
    </location>
</feature>
<feature type="binding site" evidence="1">
    <location>
        <position position="156"/>
    </location>
    <ligand>
        <name>1-deoxy-D-xylulose 5-phosphate</name>
        <dbReference type="ChEBI" id="CHEBI:57792"/>
    </ligand>
</feature>
<feature type="binding site" evidence="1">
    <location>
        <begin position="182"/>
        <end position="183"/>
    </location>
    <ligand>
        <name>1-deoxy-D-xylulose 5-phosphate</name>
        <dbReference type="ChEBI" id="CHEBI:57792"/>
    </ligand>
</feature>
<feature type="binding site" evidence="1">
    <location>
        <begin position="204"/>
        <end position="205"/>
    </location>
    <ligand>
        <name>1-deoxy-D-xylulose 5-phosphate</name>
        <dbReference type="ChEBI" id="CHEBI:57792"/>
    </ligand>
</feature>
<dbReference type="EC" id="2.8.1.10" evidence="1"/>
<dbReference type="EMBL" id="AE017220">
    <property type="protein sequence ID" value="AAX67948.1"/>
    <property type="status" value="ALT_INIT"/>
    <property type="molecule type" value="Genomic_DNA"/>
</dbReference>
<dbReference type="RefSeq" id="WP_000944068.1">
    <property type="nucleotide sequence ID" value="NC_006905.1"/>
</dbReference>
<dbReference type="SMR" id="Q57H64"/>
<dbReference type="KEGG" id="sec:SCH_4042"/>
<dbReference type="HOGENOM" id="CLU_062233_0_0_6"/>
<dbReference type="UniPathway" id="UPA00060"/>
<dbReference type="Proteomes" id="UP000000538">
    <property type="component" value="Chromosome"/>
</dbReference>
<dbReference type="GO" id="GO:0005737">
    <property type="term" value="C:cytoplasm"/>
    <property type="evidence" value="ECO:0007669"/>
    <property type="project" value="UniProtKB-SubCell"/>
</dbReference>
<dbReference type="GO" id="GO:1990107">
    <property type="term" value="F:thiazole synthase activity"/>
    <property type="evidence" value="ECO:0007669"/>
    <property type="project" value="UniProtKB-EC"/>
</dbReference>
<dbReference type="GO" id="GO:0009229">
    <property type="term" value="P:thiamine diphosphate biosynthetic process"/>
    <property type="evidence" value="ECO:0007669"/>
    <property type="project" value="UniProtKB-UniRule"/>
</dbReference>
<dbReference type="CDD" id="cd04728">
    <property type="entry name" value="ThiG"/>
    <property type="match status" value="1"/>
</dbReference>
<dbReference type="FunFam" id="3.20.20.70:FF:000049">
    <property type="entry name" value="Thiazole synthase"/>
    <property type="match status" value="1"/>
</dbReference>
<dbReference type="Gene3D" id="3.20.20.70">
    <property type="entry name" value="Aldolase class I"/>
    <property type="match status" value="1"/>
</dbReference>
<dbReference type="HAMAP" id="MF_00443">
    <property type="entry name" value="ThiG"/>
    <property type="match status" value="1"/>
</dbReference>
<dbReference type="InterPro" id="IPR013785">
    <property type="entry name" value="Aldolase_TIM"/>
</dbReference>
<dbReference type="InterPro" id="IPR033983">
    <property type="entry name" value="Thiazole_synthase_ThiG"/>
</dbReference>
<dbReference type="InterPro" id="IPR008867">
    <property type="entry name" value="ThiG"/>
</dbReference>
<dbReference type="PANTHER" id="PTHR34266">
    <property type="entry name" value="THIAZOLE SYNTHASE"/>
    <property type="match status" value="1"/>
</dbReference>
<dbReference type="PANTHER" id="PTHR34266:SF2">
    <property type="entry name" value="THIAZOLE SYNTHASE"/>
    <property type="match status" value="1"/>
</dbReference>
<dbReference type="Pfam" id="PF05690">
    <property type="entry name" value="ThiG"/>
    <property type="match status" value="1"/>
</dbReference>
<dbReference type="SUPFAM" id="SSF110399">
    <property type="entry name" value="ThiG-like"/>
    <property type="match status" value="1"/>
</dbReference>
<comment type="function">
    <text evidence="1">Catalyzes the rearrangement of 1-deoxy-D-xylulose 5-phosphate (DXP) to produce the thiazole phosphate moiety of thiamine. Sulfur is provided by the thiocarboxylate moiety of the carrier protein ThiS. In vitro, sulfur can be provided by H(2)S.</text>
</comment>
<comment type="catalytic activity">
    <reaction evidence="1">
        <text>[ThiS sulfur-carrier protein]-C-terminal-Gly-aminoethanethioate + 2-iminoacetate + 1-deoxy-D-xylulose 5-phosphate = [ThiS sulfur-carrier protein]-C-terminal Gly-Gly + 2-[(2R,5Z)-2-carboxy-4-methylthiazol-5(2H)-ylidene]ethyl phosphate + 2 H2O + H(+)</text>
        <dbReference type="Rhea" id="RHEA:26297"/>
        <dbReference type="Rhea" id="RHEA-COMP:12909"/>
        <dbReference type="Rhea" id="RHEA-COMP:19908"/>
        <dbReference type="ChEBI" id="CHEBI:15377"/>
        <dbReference type="ChEBI" id="CHEBI:15378"/>
        <dbReference type="ChEBI" id="CHEBI:57792"/>
        <dbReference type="ChEBI" id="CHEBI:62899"/>
        <dbReference type="ChEBI" id="CHEBI:77846"/>
        <dbReference type="ChEBI" id="CHEBI:90778"/>
        <dbReference type="ChEBI" id="CHEBI:232372"/>
        <dbReference type="EC" id="2.8.1.10"/>
    </reaction>
</comment>
<comment type="pathway">
    <text evidence="1">Cofactor biosynthesis; thiamine diphosphate biosynthesis.</text>
</comment>
<comment type="subunit">
    <text evidence="1">Homotetramer. Forms heterodimers with either ThiH or ThiS.</text>
</comment>
<comment type="subcellular location">
    <subcellularLocation>
        <location evidence="1">Cytoplasm</location>
    </subcellularLocation>
</comment>
<comment type="similarity">
    <text evidence="1">Belongs to the ThiG family.</text>
</comment>
<comment type="sequence caution" evidence="2">
    <conflict type="erroneous initiation">
        <sequence resource="EMBL-CDS" id="AAX67948"/>
    </conflict>
</comment>
<name>THIG_SALCH</name>